<reference evidence="5 7" key="1">
    <citation type="journal article" date="2003" name="Plant Physiol.">
        <title>Fructan 1-exohydrolases. beta-(2,1)-trimmers during graminan biosynthesis in stems of wheat? Purification, characterization, mass mapping, and cloning of two fructan 1-exohydrolase isoforms.</title>
        <authorList>
            <person name="Van Den Ende W."/>
            <person name="Clerens S."/>
            <person name="Vergauwen R."/>
            <person name="Van Riet L."/>
            <person name="Van Laere A."/>
            <person name="Yoshida M."/>
            <person name="Kawakami A."/>
        </authorList>
    </citation>
    <scope>NUCLEOTIDE SEQUENCE [MRNA]</scope>
    <scope>FUNCTION</scope>
    <scope>CATALYTIC ACTIVITY</scope>
    <scope>ACTIVITY REGULATION</scope>
    <scope>BIOPHYSICOCHEMICAL PROPERTIES</scope>
    <source>
        <strain evidence="3">cv. Pajero</strain>
        <tissue evidence="3">Stem</tissue>
    </source>
</reference>
<reference evidence="6" key="2">
    <citation type="journal article" date="2008" name="Mol. Breed.">
        <title>The genome structure of the 1-FEH genes in wheat (Triticum aestivum L.): new markers to track stem carbohydrates and grain filling QTLs in breeding.</title>
        <authorList>
            <person name="Zhang J."/>
            <person name="Huang S."/>
            <person name="Fosu-Nyarko J."/>
            <person name="Dell B."/>
            <person name="McNeil M."/>
            <person name="Waters I."/>
            <person name="Moolhuijzen P."/>
            <person name="Conocono E."/>
            <person name="Appels R."/>
        </authorList>
        <dbReference type="AGRICOLA" id="IND44093987"/>
    </citation>
    <scope>NUCLEOTIDE SEQUENCE [GENOMIC DNA]</scope>
    <source>
        <strain evidence="4">cv. Chinese Spring</strain>
    </source>
</reference>
<gene>
    <name evidence="7" type="primary">1-FEHw1</name>
</gene>
<evidence type="ECO:0000250" key="1">
    <source>
        <dbReference type="UniProtKB" id="Q43866"/>
    </source>
</evidence>
<evidence type="ECO:0000255" key="2"/>
<evidence type="ECO:0000269" key="3">
    <source>
    </source>
</evidence>
<evidence type="ECO:0000269" key="4">
    <source ref="2"/>
</evidence>
<evidence type="ECO:0000305" key="5"/>
<evidence type="ECO:0000312" key="6">
    <source>
        <dbReference type="EMBL" id="ACI16115.1"/>
    </source>
</evidence>
<evidence type="ECO:0000312" key="7">
    <source>
        <dbReference type="EMBL" id="CAD56806.1"/>
    </source>
</evidence>
<name>1FEH1_WHEAT</name>
<organism>
    <name type="scientific">Triticum aestivum</name>
    <name type="common">Wheat</name>
    <dbReference type="NCBI Taxonomy" id="4565"/>
    <lineage>
        <taxon>Eukaryota</taxon>
        <taxon>Viridiplantae</taxon>
        <taxon>Streptophyta</taxon>
        <taxon>Embryophyta</taxon>
        <taxon>Tracheophyta</taxon>
        <taxon>Spermatophyta</taxon>
        <taxon>Magnoliopsida</taxon>
        <taxon>Liliopsida</taxon>
        <taxon>Poales</taxon>
        <taxon>Poaceae</taxon>
        <taxon>BOP clade</taxon>
        <taxon>Pooideae</taxon>
        <taxon>Triticodae</taxon>
        <taxon>Triticeae</taxon>
        <taxon>Triticinae</taxon>
        <taxon>Triticum</taxon>
    </lineage>
</organism>
<dbReference type="EC" id="3.2.1.153"/>
<dbReference type="EMBL" id="AJ516025">
    <property type="protein sequence ID" value="CAD56806.1"/>
    <property type="molecule type" value="mRNA"/>
</dbReference>
<dbReference type="EMBL" id="FJ184989">
    <property type="protein sequence ID" value="ACI16115.1"/>
    <property type="molecule type" value="Genomic_DNA"/>
</dbReference>
<dbReference type="SMR" id="Q84PN8"/>
<dbReference type="STRING" id="4565.Q84PN8"/>
<dbReference type="CAZy" id="GH32">
    <property type="family name" value="Glycoside Hydrolase Family 32"/>
</dbReference>
<dbReference type="GlyCosmos" id="Q84PN8">
    <property type="glycosylation" value="4 sites, No reported glycans"/>
</dbReference>
<dbReference type="PaxDb" id="4565-Traes_6AS_1A94E971B.1"/>
<dbReference type="EnsemblPlants" id="TraesARI6A03G03209130.1">
    <property type="protein sequence ID" value="TraesARI6A03G03209130.1"/>
    <property type="gene ID" value="TraesARI6A03G03209130"/>
</dbReference>
<dbReference type="EnsemblPlants" id="TraesCS6A02G060700.1">
    <property type="protein sequence ID" value="TraesCS6A02G060700.1"/>
    <property type="gene ID" value="TraesCS6A02G060700"/>
</dbReference>
<dbReference type="EnsemblPlants" id="TraesCS6A03G0136500.1">
    <property type="protein sequence ID" value="TraesCS6A03G0136500.1.CDS"/>
    <property type="gene ID" value="TraesCS6A03G0136500"/>
</dbReference>
<dbReference type="EnsemblPlants" id="TraesJUL6A03G03280030.1">
    <property type="protein sequence ID" value="TraesJUL6A03G03280030.1"/>
    <property type="gene ID" value="TraesJUL6A03G03280030"/>
</dbReference>
<dbReference type="EnsemblPlants" id="TraesLDM6A03G03257120.1">
    <property type="protein sequence ID" value="TraesLDM6A03G03257120.1"/>
    <property type="gene ID" value="TraesLDM6A03G03257120"/>
</dbReference>
<dbReference type="EnsemblPlants" id="TraesMAC6A03G03252830.1">
    <property type="protein sequence ID" value="TraesMAC6A03G03252830.1"/>
    <property type="gene ID" value="TraesMAC6A03G03252830"/>
</dbReference>
<dbReference type="EnsemblPlants" id="TraesSTA6A03G03243910.1">
    <property type="protein sequence ID" value="TraesSTA6A03G03243910.1"/>
    <property type="gene ID" value="TraesSTA6A03G03243910"/>
</dbReference>
<dbReference type="Gramene" id="TraesARI6A03G03209130.1">
    <property type="protein sequence ID" value="TraesARI6A03G03209130.1"/>
    <property type="gene ID" value="TraesARI6A03G03209130"/>
</dbReference>
<dbReference type="Gramene" id="TraesCS6A02G060700.1">
    <property type="protein sequence ID" value="TraesCS6A02G060700.1"/>
    <property type="gene ID" value="TraesCS6A02G060700"/>
</dbReference>
<dbReference type="Gramene" id="TraesCS6A03G0136500.1">
    <property type="protein sequence ID" value="TraesCS6A03G0136500.1.CDS"/>
    <property type="gene ID" value="TraesCS6A03G0136500"/>
</dbReference>
<dbReference type="Gramene" id="TraesJUL6A03G03280030.1">
    <property type="protein sequence ID" value="TraesJUL6A03G03280030.1"/>
    <property type="gene ID" value="TraesJUL6A03G03280030"/>
</dbReference>
<dbReference type="Gramene" id="TraesLDM6A03G03257120.1">
    <property type="protein sequence ID" value="TraesLDM6A03G03257120.1"/>
    <property type="gene ID" value="TraesLDM6A03G03257120"/>
</dbReference>
<dbReference type="Gramene" id="TraesMAC6A03G03252830.1">
    <property type="protein sequence ID" value="TraesMAC6A03G03252830.1"/>
    <property type="gene ID" value="TraesMAC6A03G03252830"/>
</dbReference>
<dbReference type="Gramene" id="TraesSTA6A03G03243910.1">
    <property type="protein sequence ID" value="TraesSTA6A03G03243910.1"/>
    <property type="gene ID" value="TraesSTA6A03G03243910"/>
</dbReference>
<dbReference type="KEGG" id="ag:CAD56806"/>
<dbReference type="eggNOG" id="KOG0228">
    <property type="taxonomic scope" value="Eukaryota"/>
</dbReference>
<dbReference type="OMA" id="MAIGENT"/>
<dbReference type="OrthoDB" id="202537at2759"/>
<dbReference type="BRENDA" id="3.2.1.153">
    <property type="organism ID" value="6500"/>
</dbReference>
<dbReference type="Proteomes" id="UP000019116">
    <property type="component" value="Chromosome 6A"/>
</dbReference>
<dbReference type="ExpressionAtlas" id="Q84PN8">
    <property type="expression patterns" value="baseline and differential"/>
</dbReference>
<dbReference type="GO" id="GO:0033948">
    <property type="term" value="F:fructan beta-(2,1)-fructosidase activity"/>
    <property type="evidence" value="ECO:0007669"/>
    <property type="project" value="UniProtKB-EC"/>
</dbReference>
<dbReference type="GO" id="GO:0016787">
    <property type="term" value="F:hydrolase activity"/>
    <property type="evidence" value="ECO:0000314"/>
    <property type="project" value="CACAO"/>
</dbReference>
<dbReference type="GO" id="GO:0005975">
    <property type="term" value="P:carbohydrate metabolic process"/>
    <property type="evidence" value="ECO:0007669"/>
    <property type="project" value="InterPro"/>
</dbReference>
<dbReference type="CDD" id="cd18624">
    <property type="entry name" value="GH32_Fruct1-like"/>
    <property type="match status" value="1"/>
</dbReference>
<dbReference type="FunFam" id="2.115.10.20:FF:000001">
    <property type="entry name" value="Beta-fructofuranosidase, insoluble isoenzyme CWINV1"/>
    <property type="match status" value="1"/>
</dbReference>
<dbReference type="FunFam" id="2.60.120.560:FF:000002">
    <property type="entry name" value="Beta-fructofuranosidase, insoluble isoenzyme CWINV1"/>
    <property type="match status" value="1"/>
</dbReference>
<dbReference type="Gene3D" id="2.60.120.560">
    <property type="entry name" value="Exo-inulinase, domain 1"/>
    <property type="match status" value="1"/>
</dbReference>
<dbReference type="Gene3D" id="2.115.10.20">
    <property type="entry name" value="Glycosyl hydrolase domain, family 43"/>
    <property type="match status" value="1"/>
</dbReference>
<dbReference type="InterPro" id="IPR013320">
    <property type="entry name" value="ConA-like_dom_sf"/>
</dbReference>
<dbReference type="InterPro" id="IPR050551">
    <property type="entry name" value="Fructan_Metab_Enzymes"/>
</dbReference>
<dbReference type="InterPro" id="IPR001362">
    <property type="entry name" value="Glyco_hydro_32"/>
</dbReference>
<dbReference type="InterPro" id="IPR013189">
    <property type="entry name" value="Glyco_hydro_32_C"/>
</dbReference>
<dbReference type="InterPro" id="IPR013148">
    <property type="entry name" value="Glyco_hydro_32_N"/>
</dbReference>
<dbReference type="InterPro" id="IPR023296">
    <property type="entry name" value="Glyco_hydro_beta-prop_sf"/>
</dbReference>
<dbReference type="PANTHER" id="PTHR31953">
    <property type="entry name" value="BETA-FRUCTOFURANOSIDASE, INSOLUBLE ISOENZYME CWINV1-RELATED"/>
    <property type="match status" value="1"/>
</dbReference>
<dbReference type="Pfam" id="PF08244">
    <property type="entry name" value="Glyco_hydro_32C"/>
    <property type="match status" value="1"/>
</dbReference>
<dbReference type="Pfam" id="PF00251">
    <property type="entry name" value="Glyco_hydro_32N"/>
    <property type="match status" value="1"/>
</dbReference>
<dbReference type="SMART" id="SM00640">
    <property type="entry name" value="Glyco_32"/>
    <property type="match status" value="1"/>
</dbReference>
<dbReference type="SUPFAM" id="SSF75005">
    <property type="entry name" value="Arabinanase/levansucrase/invertase"/>
    <property type="match status" value="1"/>
</dbReference>
<dbReference type="SUPFAM" id="SSF49899">
    <property type="entry name" value="Concanavalin A-like lectins/glucanases"/>
    <property type="match status" value="1"/>
</dbReference>
<feature type="signal peptide" evidence="2">
    <location>
        <begin position="1"/>
        <end position="20"/>
    </location>
</feature>
<feature type="chain" id="PRO_0000395552" description="Fructan 1-exohydrolase w1" evidence="2">
    <location>
        <begin position="21"/>
        <end position="597"/>
    </location>
</feature>
<feature type="active site" evidence="1">
    <location>
        <position position="76"/>
    </location>
</feature>
<feature type="glycosylation site" description="N-linked (GlcNAc...) asparagine" evidence="2">
    <location>
        <position position="169"/>
    </location>
</feature>
<feature type="glycosylation site" description="N-linked (GlcNAc...) asparagine" evidence="2">
    <location>
        <position position="237"/>
    </location>
</feature>
<feature type="glycosylation site" description="N-linked (GlcNAc...) asparagine" evidence="2">
    <location>
        <position position="249"/>
    </location>
</feature>
<feature type="glycosylation site" description="N-linked (GlcNAc...) asparagine" evidence="2">
    <location>
        <position position="568"/>
    </location>
</feature>
<feature type="disulfide bond" evidence="1">
    <location>
        <begin position="447"/>
        <end position="493"/>
    </location>
</feature>
<proteinExistence type="evidence at protein level"/>
<sequence>MAQAWAFLLPVLVFGSYVTSLFFPSYISGPLCGGDGGGRSLFLCAQAPKDQDPSPAVSTMYKTAFHFQPAKNWMNDPSGPMYFNGFYHEFYQYNLNGPIFGDIVWGHSVSTDLVNWIGLEPALVRDTPSDIDGCWTGSVTILPGGKPVIIYTGGDKDQHQAQNIAFPKNRSDPYLREWIKAANNPVLRPDEPGMNSIEFRDPTTGWIGPDGLWRMAVGGELNGYSAALLYKSEDFLNWTKVDHPLYSHNGSNMWECPDFFAVLPGNNAGLDLSAAIPQGAKHALKMSVDSVDKYMIGVYDLQRDAFVPDNVVDDRRLWLRIDYGTFYASKSFFDSNKNRRIIWGWSRETDSPSDDLEKGWAGLHTIPRTIWLADNGKQLLQWPVEEIESLRTNEISHQGIELNKGDLFEIKEVDAFQADVEIGFELASIDDADPFDPSWLLDPEKHCGEAGASVPGGIGPFGLVILASDNMDEHTEVYFRVYKSQEKYMVLMCSDLRRSSLRPDLEKPAYGGFFEFDLEKERKISLRTLIDRSAVESFGGGGRVCITSRVYPAVLADVGRAHIYAFNNGSATVRVPQLSAWTMRKAQVNVEKGWSAI</sequence>
<keyword id="KW-1015">Disulfide bond</keyword>
<keyword id="KW-0325">Glycoprotein</keyword>
<keyword id="KW-0326">Glycosidase</keyword>
<keyword id="KW-0378">Hydrolase</keyword>
<keyword id="KW-1185">Reference proteome</keyword>
<keyword id="KW-0732">Signal</keyword>
<comment type="function">
    <text evidence="3">Hydrolyzes inulin-type beta-(2,1)-fructans and beta-(2,1)-linkages in branched fructans. Has low activity against beta-(2,6)-linked fructans. May play a role as a beta-(2,1)-trimmer during graminan biosynthesis.</text>
</comment>
<comment type="catalytic activity">
    <reaction evidence="3">
        <text>Hydrolysis of terminal, non-reducing (2-&gt;1)-linked beta-D-fructofuranose residues in fructans.</text>
        <dbReference type="EC" id="3.2.1.153"/>
    </reaction>
</comment>
<comment type="activity regulation">
    <text evidence="3">Inhibited by sucrose.</text>
</comment>
<comment type="biophysicochemical properties">
    <kinetics>
        <KM evidence="3">7 mM for 1-kestose</KM>
    </kinetics>
    <phDependence>
        <text evidence="3">Optimum pH is 4.5-5.5. Inactive above pH 7.5.</text>
    </phDependence>
    <temperatureDependence>
        <text evidence="3">Optimum temperature is 30-40 degrees Celsius.</text>
    </temperatureDependence>
</comment>
<comment type="similarity">
    <text evidence="2">Belongs to the glycosyl hydrolase 32 family.</text>
</comment>
<protein>
    <recommendedName>
        <fullName evidence="7">Fructan 1-exohydrolase w1</fullName>
        <ecNumber>3.2.1.153</ecNumber>
    </recommendedName>
</protein>
<accession>Q84PN8</accession>